<sequence>MSIPADLKYTESHEWVRTEADGTLTVGITDHAQEALGDIVFFEVQELGKTVSAGDTVAVIESVKAASDIYAPVSGEIIEANSAVADTPDLVNSTPYESWLFKIKPAADAALDRLIDADAYSKSIGA</sequence>
<evidence type="ECO:0000255" key="1">
    <source>
        <dbReference type="HAMAP-Rule" id="MF_00272"/>
    </source>
</evidence>
<evidence type="ECO:0000255" key="2">
    <source>
        <dbReference type="PROSITE-ProRule" id="PRU01066"/>
    </source>
</evidence>
<accession>Q13SR7</accession>
<organism>
    <name type="scientific">Paraburkholderia xenovorans (strain LB400)</name>
    <dbReference type="NCBI Taxonomy" id="266265"/>
    <lineage>
        <taxon>Bacteria</taxon>
        <taxon>Pseudomonadati</taxon>
        <taxon>Pseudomonadota</taxon>
        <taxon>Betaproteobacteria</taxon>
        <taxon>Burkholderiales</taxon>
        <taxon>Burkholderiaceae</taxon>
        <taxon>Paraburkholderia</taxon>
    </lineage>
</organism>
<dbReference type="EMBL" id="CP000270">
    <property type="protein sequence ID" value="ABE32872.1"/>
    <property type="molecule type" value="Genomic_DNA"/>
</dbReference>
<dbReference type="RefSeq" id="WP_011490274.1">
    <property type="nucleotide sequence ID" value="NC_007951.1"/>
</dbReference>
<dbReference type="SMR" id="Q13SR7"/>
<dbReference type="STRING" id="266265.Bxe_A0055"/>
<dbReference type="KEGG" id="bxb:DR64_2234"/>
<dbReference type="KEGG" id="bxe:Bxe_A0055"/>
<dbReference type="PATRIC" id="fig|266265.5.peg.4556"/>
<dbReference type="eggNOG" id="COG0509">
    <property type="taxonomic scope" value="Bacteria"/>
</dbReference>
<dbReference type="OrthoDB" id="9796712at2"/>
<dbReference type="Proteomes" id="UP000001817">
    <property type="component" value="Chromosome 1"/>
</dbReference>
<dbReference type="GO" id="GO:0005829">
    <property type="term" value="C:cytosol"/>
    <property type="evidence" value="ECO:0007669"/>
    <property type="project" value="TreeGrafter"/>
</dbReference>
<dbReference type="GO" id="GO:0005960">
    <property type="term" value="C:glycine cleavage complex"/>
    <property type="evidence" value="ECO:0007669"/>
    <property type="project" value="InterPro"/>
</dbReference>
<dbReference type="GO" id="GO:0019464">
    <property type="term" value="P:glycine decarboxylation via glycine cleavage system"/>
    <property type="evidence" value="ECO:0007669"/>
    <property type="project" value="UniProtKB-UniRule"/>
</dbReference>
<dbReference type="CDD" id="cd06848">
    <property type="entry name" value="GCS_H"/>
    <property type="match status" value="1"/>
</dbReference>
<dbReference type="Gene3D" id="2.40.50.100">
    <property type="match status" value="1"/>
</dbReference>
<dbReference type="HAMAP" id="MF_00272">
    <property type="entry name" value="GcvH"/>
    <property type="match status" value="1"/>
</dbReference>
<dbReference type="InterPro" id="IPR003016">
    <property type="entry name" value="2-oxoA_DH_lipoyl-BS"/>
</dbReference>
<dbReference type="InterPro" id="IPR000089">
    <property type="entry name" value="Biotin_lipoyl"/>
</dbReference>
<dbReference type="InterPro" id="IPR002930">
    <property type="entry name" value="GCV_H"/>
</dbReference>
<dbReference type="InterPro" id="IPR033753">
    <property type="entry name" value="GCV_H/Fam206"/>
</dbReference>
<dbReference type="InterPro" id="IPR017453">
    <property type="entry name" value="GCV_H_sub"/>
</dbReference>
<dbReference type="InterPro" id="IPR011053">
    <property type="entry name" value="Single_hybrid_motif"/>
</dbReference>
<dbReference type="NCBIfam" id="TIGR00527">
    <property type="entry name" value="gcvH"/>
    <property type="match status" value="1"/>
</dbReference>
<dbReference type="NCBIfam" id="NF002270">
    <property type="entry name" value="PRK01202.1"/>
    <property type="match status" value="1"/>
</dbReference>
<dbReference type="PANTHER" id="PTHR11715">
    <property type="entry name" value="GLYCINE CLEAVAGE SYSTEM H PROTEIN"/>
    <property type="match status" value="1"/>
</dbReference>
<dbReference type="PANTHER" id="PTHR11715:SF3">
    <property type="entry name" value="GLYCINE CLEAVAGE SYSTEM H PROTEIN-RELATED"/>
    <property type="match status" value="1"/>
</dbReference>
<dbReference type="Pfam" id="PF01597">
    <property type="entry name" value="GCV_H"/>
    <property type="match status" value="1"/>
</dbReference>
<dbReference type="SUPFAM" id="SSF51230">
    <property type="entry name" value="Single hybrid motif"/>
    <property type="match status" value="1"/>
</dbReference>
<dbReference type="PROSITE" id="PS50968">
    <property type="entry name" value="BIOTINYL_LIPOYL"/>
    <property type="match status" value="1"/>
</dbReference>
<dbReference type="PROSITE" id="PS00189">
    <property type="entry name" value="LIPOYL"/>
    <property type="match status" value="1"/>
</dbReference>
<comment type="function">
    <text evidence="1">The glycine cleavage system catalyzes the degradation of glycine. The H protein shuttles the methylamine group of glycine from the P protein to the T protein.</text>
</comment>
<comment type="cofactor">
    <cofactor evidence="1">
        <name>(R)-lipoate</name>
        <dbReference type="ChEBI" id="CHEBI:83088"/>
    </cofactor>
    <text evidence="1">Binds 1 lipoyl cofactor covalently.</text>
</comment>
<comment type="subunit">
    <text evidence="1">The glycine cleavage system is composed of four proteins: P, T, L and H.</text>
</comment>
<comment type="similarity">
    <text evidence="1">Belongs to the GcvH family.</text>
</comment>
<name>GCSH_PARXL</name>
<feature type="chain" id="PRO_0000302362" description="Glycine cleavage system H protein">
    <location>
        <begin position="1"/>
        <end position="126"/>
    </location>
</feature>
<feature type="domain" description="Lipoyl-binding" evidence="2">
    <location>
        <begin position="23"/>
        <end position="104"/>
    </location>
</feature>
<feature type="modified residue" description="N6-lipoyllysine" evidence="1">
    <location>
        <position position="64"/>
    </location>
</feature>
<gene>
    <name evidence="1" type="primary">gcvH</name>
    <name type="ordered locus">Bxeno_A4334</name>
    <name type="ORF">Bxe_A0055</name>
</gene>
<protein>
    <recommendedName>
        <fullName evidence="1">Glycine cleavage system H protein</fullName>
    </recommendedName>
</protein>
<keyword id="KW-0450">Lipoyl</keyword>
<keyword id="KW-1185">Reference proteome</keyword>
<proteinExistence type="inferred from homology"/>
<reference key="1">
    <citation type="journal article" date="2006" name="Proc. Natl. Acad. Sci. U.S.A.">
        <title>Burkholderia xenovorans LB400 harbors a multi-replicon, 9.73-Mbp genome shaped for versatility.</title>
        <authorList>
            <person name="Chain P.S.G."/>
            <person name="Denef V.J."/>
            <person name="Konstantinidis K.T."/>
            <person name="Vergez L.M."/>
            <person name="Agullo L."/>
            <person name="Reyes V.L."/>
            <person name="Hauser L."/>
            <person name="Cordova M."/>
            <person name="Gomez L."/>
            <person name="Gonzalez M."/>
            <person name="Land M."/>
            <person name="Lao V."/>
            <person name="Larimer F."/>
            <person name="LiPuma J.J."/>
            <person name="Mahenthiralingam E."/>
            <person name="Malfatti S.A."/>
            <person name="Marx C.J."/>
            <person name="Parnell J.J."/>
            <person name="Ramette A."/>
            <person name="Richardson P."/>
            <person name="Seeger M."/>
            <person name="Smith D."/>
            <person name="Spilker T."/>
            <person name="Sul W.J."/>
            <person name="Tsoi T.V."/>
            <person name="Ulrich L.E."/>
            <person name="Zhulin I.B."/>
            <person name="Tiedje J.M."/>
        </authorList>
    </citation>
    <scope>NUCLEOTIDE SEQUENCE [LARGE SCALE GENOMIC DNA]</scope>
    <source>
        <strain>LB400</strain>
    </source>
</reference>